<feature type="chain" id="PRO_0000152279" description="Sugar fermentation stimulation protein homolog">
    <location>
        <begin position="1"/>
        <end position="230"/>
    </location>
</feature>
<reference key="1">
    <citation type="journal article" date="2003" name="Proc. Natl. Acad. Sci. U.S.A.">
        <title>The genome sequence of Clostridium tetani, the causative agent of tetanus disease.</title>
        <authorList>
            <person name="Brueggemann H."/>
            <person name="Baeumer S."/>
            <person name="Fricke W.F."/>
            <person name="Wiezer A."/>
            <person name="Liesegang H."/>
            <person name="Decker I."/>
            <person name="Herzberg C."/>
            <person name="Martinez-Arias R."/>
            <person name="Merkl R."/>
            <person name="Henne A."/>
            <person name="Gottschalk G."/>
        </authorList>
    </citation>
    <scope>NUCLEOTIDE SEQUENCE [LARGE SCALE GENOMIC DNA]</scope>
    <source>
        <strain>Massachusetts / E88</strain>
    </source>
</reference>
<dbReference type="EMBL" id="AE015927">
    <property type="protein sequence ID" value="AAO34725.1"/>
    <property type="molecule type" value="Genomic_DNA"/>
</dbReference>
<dbReference type="RefSeq" id="WP_011098398.1">
    <property type="nucleotide sequence ID" value="NC_004557.1"/>
</dbReference>
<dbReference type="SMR" id="Q899U6"/>
<dbReference type="STRING" id="212717.CTC_00070"/>
<dbReference type="GeneID" id="24252794"/>
<dbReference type="KEGG" id="ctc:CTC_00070"/>
<dbReference type="HOGENOM" id="CLU_052299_1_0_9"/>
<dbReference type="OrthoDB" id="9802365at2"/>
<dbReference type="Proteomes" id="UP000001412">
    <property type="component" value="Chromosome"/>
</dbReference>
<dbReference type="GO" id="GO:0003677">
    <property type="term" value="F:DNA binding"/>
    <property type="evidence" value="ECO:0007669"/>
    <property type="project" value="InterPro"/>
</dbReference>
<dbReference type="CDD" id="cd22359">
    <property type="entry name" value="SfsA-like_bacterial"/>
    <property type="match status" value="1"/>
</dbReference>
<dbReference type="FunFam" id="2.40.50.580:FF:000002">
    <property type="entry name" value="Sugar fermentation stimulation protein homolog"/>
    <property type="match status" value="1"/>
</dbReference>
<dbReference type="Gene3D" id="2.40.50.580">
    <property type="match status" value="1"/>
</dbReference>
<dbReference type="Gene3D" id="3.40.1350.60">
    <property type="match status" value="1"/>
</dbReference>
<dbReference type="HAMAP" id="MF_00095">
    <property type="entry name" value="SfsA"/>
    <property type="match status" value="1"/>
</dbReference>
<dbReference type="InterPro" id="IPR005224">
    <property type="entry name" value="SfsA"/>
</dbReference>
<dbReference type="InterPro" id="IPR040452">
    <property type="entry name" value="SfsA_C"/>
</dbReference>
<dbReference type="InterPro" id="IPR041465">
    <property type="entry name" value="SfsA_N"/>
</dbReference>
<dbReference type="NCBIfam" id="TIGR00230">
    <property type="entry name" value="sfsA"/>
    <property type="match status" value="1"/>
</dbReference>
<dbReference type="PANTHER" id="PTHR30545">
    <property type="entry name" value="SUGAR FERMENTATION STIMULATION PROTEIN A"/>
    <property type="match status" value="1"/>
</dbReference>
<dbReference type="PANTHER" id="PTHR30545:SF2">
    <property type="entry name" value="SUGAR FERMENTATION STIMULATION PROTEIN A"/>
    <property type="match status" value="1"/>
</dbReference>
<dbReference type="Pfam" id="PF03749">
    <property type="entry name" value="SfsA"/>
    <property type="match status" value="1"/>
</dbReference>
<dbReference type="Pfam" id="PF17746">
    <property type="entry name" value="SfsA_N"/>
    <property type="match status" value="1"/>
</dbReference>
<keyword id="KW-1185">Reference proteome</keyword>
<evidence type="ECO:0000255" key="1">
    <source>
        <dbReference type="HAMAP-Rule" id="MF_00095"/>
    </source>
</evidence>
<gene>
    <name evidence="1" type="primary">sfsA</name>
    <name type="ordered locus">CTC_00070</name>
</gene>
<sequence length="230" mass="26222">MIIKKNIKRAEFIKRPNRFQAYVKVDNEEIMVHVPNTGRCKEILIPGTTVVLREESNPTRKTKYDLIGGYKNGKFINIDSQIPNKVVEEALKLGNIKKLKKYNIIKREKTYGNSRFDFKLGNDSGEEYYLEVKGVTLEDGGVTKFPDAPTERGTKHILELIDVKNKGIGAGVLFLIQMKDVKYFTPNIEMDKNFSEALVSAHKAGVDIFAYECDVDEDFITLKKEVKVIL</sequence>
<organism>
    <name type="scientific">Clostridium tetani (strain Massachusetts / E88)</name>
    <dbReference type="NCBI Taxonomy" id="212717"/>
    <lineage>
        <taxon>Bacteria</taxon>
        <taxon>Bacillati</taxon>
        <taxon>Bacillota</taxon>
        <taxon>Clostridia</taxon>
        <taxon>Eubacteriales</taxon>
        <taxon>Clostridiaceae</taxon>
        <taxon>Clostridium</taxon>
    </lineage>
</organism>
<accession>Q899U6</accession>
<name>SFSA_CLOTE</name>
<comment type="similarity">
    <text evidence="1">Belongs to the SfsA family.</text>
</comment>
<proteinExistence type="inferred from homology"/>
<protein>
    <recommendedName>
        <fullName evidence="1">Sugar fermentation stimulation protein homolog</fullName>
    </recommendedName>
</protein>